<dbReference type="EMBL" id="Y13227">
    <property type="protein sequence ID" value="CAA73670.1"/>
    <property type="molecule type" value="Genomic_DNA"/>
</dbReference>
<dbReference type="RefSeq" id="WP_011727673.1">
    <property type="nucleotide sequence ID" value="NZ_UGQO01000001.1"/>
</dbReference>
<dbReference type="PDB" id="7S0S">
    <property type="method" value="EM"/>
    <property type="resolution" value="3.05 A"/>
    <property type="chains" value="U=6-119"/>
</dbReference>
<dbReference type="PDBsum" id="7S0S"/>
<dbReference type="EMDB" id="EMD-24792"/>
<dbReference type="SMR" id="O06115"/>
<dbReference type="GeneID" id="93456285"/>
<dbReference type="KEGG" id="msh:LI98_07190"/>
<dbReference type="KEGG" id="msn:LI99_07190"/>
<dbReference type="OMA" id="KRIQPRA"/>
<dbReference type="GO" id="GO:0022625">
    <property type="term" value="C:cytosolic large ribosomal subunit"/>
    <property type="evidence" value="ECO:0007669"/>
    <property type="project" value="TreeGrafter"/>
</dbReference>
<dbReference type="GO" id="GO:0019843">
    <property type="term" value="F:rRNA binding"/>
    <property type="evidence" value="ECO:0007669"/>
    <property type="project" value="UniProtKB-UniRule"/>
</dbReference>
<dbReference type="GO" id="GO:0003735">
    <property type="term" value="F:structural constituent of ribosome"/>
    <property type="evidence" value="ECO:0007669"/>
    <property type="project" value="InterPro"/>
</dbReference>
<dbReference type="GO" id="GO:0006412">
    <property type="term" value="P:translation"/>
    <property type="evidence" value="ECO:0007669"/>
    <property type="project" value="UniProtKB-UniRule"/>
</dbReference>
<dbReference type="CDD" id="cd00336">
    <property type="entry name" value="Ribosomal_L22"/>
    <property type="match status" value="1"/>
</dbReference>
<dbReference type="FunFam" id="3.90.470.10:FF:000002">
    <property type="entry name" value="50S ribosomal protein L22"/>
    <property type="match status" value="1"/>
</dbReference>
<dbReference type="Gene3D" id="3.90.470.10">
    <property type="entry name" value="Ribosomal protein L22/L17"/>
    <property type="match status" value="1"/>
</dbReference>
<dbReference type="HAMAP" id="MF_01331_B">
    <property type="entry name" value="Ribosomal_uL22_B"/>
    <property type="match status" value="1"/>
</dbReference>
<dbReference type="InterPro" id="IPR001063">
    <property type="entry name" value="Ribosomal_uL22"/>
</dbReference>
<dbReference type="InterPro" id="IPR005727">
    <property type="entry name" value="Ribosomal_uL22_bac/chlpt-type"/>
</dbReference>
<dbReference type="InterPro" id="IPR047867">
    <property type="entry name" value="Ribosomal_uL22_bac/org-type"/>
</dbReference>
<dbReference type="InterPro" id="IPR018260">
    <property type="entry name" value="Ribosomal_uL22_CS"/>
</dbReference>
<dbReference type="InterPro" id="IPR036394">
    <property type="entry name" value="Ribosomal_uL22_sf"/>
</dbReference>
<dbReference type="NCBIfam" id="TIGR01044">
    <property type="entry name" value="rplV_bact"/>
    <property type="match status" value="1"/>
</dbReference>
<dbReference type="PANTHER" id="PTHR13501">
    <property type="entry name" value="CHLOROPLAST 50S RIBOSOMAL PROTEIN L22-RELATED"/>
    <property type="match status" value="1"/>
</dbReference>
<dbReference type="PANTHER" id="PTHR13501:SF8">
    <property type="entry name" value="LARGE RIBOSOMAL SUBUNIT PROTEIN UL22M"/>
    <property type="match status" value="1"/>
</dbReference>
<dbReference type="Pfam" id="PF00237">
    <property type="entry name" value="Ribosomal_L22"/>
    <property type="match status" value="1"/>
</dbReference>
<dbReference type="SUPFAM" id="SSF54843">
    <property type="entry name" value="Ribosomal protein L22"/>
    <property type="match status" value="1"/>
</dbReference>
<dbReference type="PROSITE" id="PS00464">
    <property type="entry name" value="RIBOSOMAL_L22"/>
    <property type="match status" value="1"/>
</dbReference>
<comment type="function">
    <text evidence="1">This protein binds specifically to 23S rRNA; its binding is stimulated by other ribosomal proteins, e.g. L4, L17, and L20. It is important during the early stages of 50S assembly. It makes multiple contacts with different domains of the 23S rRNA in the assembled 50S subunit and ribosome (By similarity).</text>
</comment>
<comment type="function">
    <text evidence="1">The globular domain of the protein is located near the polypeptide exit tunnel on the outside of the subunit, while an extended beta-hairpin is found that lines the wall of the exit tunnel in the center of the 70S ribosome.</text>
</comment>
<comment type="subunit">
    <text evidence="1">Part of the 50S ribosomal subunit.</text>
</comment>
<comment type="similarity">
    <text evidence="1">Belongs to the universal ribosomal protein uL22 family.</text>
</comment>
<evidence type="ECO:0000255" key="1">
    <source>
        <dbReference type="HAMAP-Rule" id="MF_01331"/>
    </source>
</evidence>
<evidence type="ECO:0000256" key="2">
    <source>
        <dbReference type="SAM" id="MobiDB-lite"/>
    </source>
</evidence>
<evidence type="ECO:0000305" key="3"/>
<feature type="chain" id="PRO_0000125186" description="Large ribosomal subunit protein uL22">
    <location>
        <begin position="1"/>
        <end position="153"/>
    </location>
</feature>
<feature type="region of interest" description="Disordered" evidence="2">
    <location>
        <begin position="110"/>
        <end position="153"/>
    </location>
</feature>
<feature type="compositionally biased region" description="Basic and acidic residues" evidence="2">
    <location>
        <begin position="144"/>
        <end position="153"/>
    </location>
</feature>
<reference key="1">
    <citation type="journal article" date="1997" name="Mol. Microbiol.">
        <title>The role of ribosomal RNAs in macrolide resistance.</title>
        <authorList>
            <person name="Sander P."/>
            <person name="Prammananan T."/>
            <person name="Meier A."/>
            <person name="Frischkorn K."/>
            <person name="Boettger E.C."/>
        </authorList>
    </citation>
    <scope>NUCLEOTIDE SEQUENCE [GENOMIC DNA]</scope>
</reference>
<organism>
    <name type="scientific">Mycolicibacterium smegmatis</name>
    <name type="common">Mycobacterium smegmatis</name>
    <dbReference type="NCBI Taxonomy" id="1772"/>
    <lineage>
        <taxon>Bacteria</taxon>
        <taxon>Bacillati</taxon>
        <taxon>Actinomycetota</taxon>
        <taxon>Actinomycetes</taxon>
        <taxon>Mycobacteriales</taxon>
        <taxon>Mycobacteriaceae</taxon>
        <taxon>Mycolicibacterium</taxon>
    </lineage>
</organism>
<proteinExistence type="evidence at protein level"/>
<accession>O06115</accession>
<keyword id="KW-0002">3D-structure</keyword>
<keyword id="KW-0687">Ribonucleoprotein</keyword>
<keyword id="KW-0689">Ribosomal protein</keyword>
<keyword id="KW-0694">RNA-binding</keyword>
<keyword id="KW-0699">rRNA-binding</keyword>
<name>RL22_MYCSM</name>
<sequence>MSTVTEFPSATAKARYVRVSATKARRVIDLVRGKSVEEALDILRWAPQAASEPVAKVIASAAANAQNNEGLDPSTLVVATVYADEGPTAKRIRPRAQGRAFRIRKRTSHITVIVESRPPKQKGASAASARSRRAQGSKAAATKKSAETKEGSE</sequence>
<gene>
    <name evidence="1" type="primary">rplV</name>
</gene>
<protein>
    <recommendedName>
        <fullName evidence="1">Large ribosomal subunit protein uL22</fullName>
    </recommendedName>
    <alternativeName>
        <fullName evidence="3">50S ribosomal protein L22</fullName>
    </alternativeName>
</protein>